<sequence>MVITNPIVYGKFIKRINRFEAYVELNSGEKTLVHVPNTGRCKEIFVPGAEVILEVRDRQGRKTPYELAFAYKGKRLISIDSQVPNKVVLESIKMGLIEEFKGYDIVEKEKTFGNSKFDIKLTKGKEICYVEVKGVTLEVEGVAKFPDAPTERGRKHLKELIKVKKEGMRAAVIFLIQMDDIKYFTPNDEQDPEFGKFLREAVGKGVEAYAYTCDVGENYVFLKDRVEVVL</sequence>
<protein>
    <recommendedName>
        <fullName evidence="1">Sugar fermentation stimulation protein homolog</fullName>
    </recommendedName>
</protein>
<feature type="chain" id="PRO_1000093597" description="Sugar fermentation stimulation protein homolog">
    <location>
        <begin position="1"/>
        <end position="230"/>
    </location>
</feature>
<reference key="1">
    <citation type="submission" date="2008-01" db="EMBL/GenBank/DDBJ databases">
        <title>Complete sequence of Thermoanaerobacter sp. X514.</title>
        <authorList>
            <consortium name="US DOE Joint Genome Institute"/>
            <person name="Copeland A."/>
            <person name="Lucas S."/>
            <person name="Lapidus A."/>
            <person name="Barry K."/>
            <person name="Glavina del Rio T."/>
            <person name="Dalin E."/>
            <person name="Tice H."/>
            <person name="Pitluck S."/>
            <person name="Bruce D."/>
            <person name="Goodwin L."/>
            <person name="Saunders E."/>
            <person name="Brettin T."/>
            <person name="Detter J.C."/>
            <person name="Han C."/>
            <person name="Schmutz J."/>
            <person name="Larimer F."/>
            <person name="Land M."/>
            <person name="Hauser L."/>
            <person name="Kyrpides N."/>
            <person name="Kim E."/>
            <person name="Hemme C."/>
            <person name="Fields M.W."/>
            <person name="He Z."/>
            <person name="Zhou J."/>
            <person name="Richardson P."/>
        </authorList>
    </citation>
    <scope>NUCLEOTIDE SEQUENCE [LARGE SCALE GENOMIC DNA]</scope>
    <source>
        <strain>X514</strain>
    </source>
</reference>
<accession>B0K5C5</accession>
<name>SFSA_THEPX</name>
<organism>
    <name type="scientific">Thermoanaerobacter sp. (strain X514)</name>
    <dbReference type="NCBI Taxonomy" id="399726"/>
    <lineage>
        <taxon>Bacteria</taxon>
        <taxon>Bacillati</taxon>
        <taxon>Bacillota</taxon>
        <taxon>Clostridia</taxon>
        <taxon>Thermoanaerobacterales</taxon>
        <taxon>Thermoanaerobacteraceae</taxon>
        <taxon>Thermoanaerobacter</taxon>
    </lineage>
</organism>
<comment type="similarity">
    <text evidence="1">Belongs to the SfsA family.</text>
</comment>
<dbReference type="EMBL" id="CP000923">
    <property type="protein sequence ID" value="ABY92118.1"/>
    <property type="molecule type" value="Genomic_DNA"/>
</dbReference>
<dbReference type="RefSeq" id="WP_009052979.1">
    <property type="nucleotide sequence ID" value="NC_010320.1"/>
</dbReference>
<dbReference type="SMR" id="B0K5C5"/>
<dbReference type="KEGG" id="tex:Teth514_0815"/>
<dbReference type="HOGENOM" id="CLU_052299_1_0_9"/>
<dbReference type="Proteomes" id="UP000002155">
    <property type="component" value="Chromosome"/>
</dbReference>
<dbReference type="GO" id="GO:0003677">
    <property type="term" value="F:DNA binding"/>
    <property type="evidence" value="ECO:0007669"/>
    <property type="project" value="InterPro"/>
</dbReference>
<dbReference type="CDD" id="cd22359">
    <property type="entry name" value="SfsA-like_bacterial"/>
    <property type="match status" value="1"/>
</dbReference>
<dbReference type="Gene3D" id="2.40.50.580">
    <property type="match status" value="1"/>
</dbReference>
<dbReference type="Gene3D" id="3.40.1350.60">
    <property type="match status" value="1"/>
</dbReference>
<dbReference type="HAMAP" id="MF_00095">
    <property type="entry name" value="SfsA"/>
    <property type="match status" value="1"/>
</dbReference>
<dbReference type="InterPro" id="IPR005224">
    <property type="entry name" value="SfsA"/>
</dbReference>
<dbReference type="InterPro" id="IPR040452">
    <property type="entry name" value="SfsA_C"/>
</dbReference>
<dbReference type="InterPro" id="IPR041465">
    <property type="entry name" value="SfsA_N"/>
</dbReference>
<dbReference type="NCBIfam" id="TIGR00230">
    <property type="entry name" value="sfsA"/>
    <property type="match status" value="1"/>
</dbReference>
<dbReference type="PANTHER" id="PTHR30545">
    <property type="entry name" value="SUGAR FERMENTATION STIMULATION PROTEIN A"/>
    <property type="match status" value="1"/>
</dbReference>
<dbReference type="PANTHER" id="PTHR30545:SF2">
    <property type="entry name" value="SUGAR FERMENTATION STIMULATION PROTEIN A"/>
    <property type="match status" value="1"/>
</dbReference>
<dbReference type="Pfam" id="PF03749">
    <property type="entry name" value="SfsA"/>
    <property type="match status" value="1"/>
</dbReference>
<dbReference type="Pfam" id="PF17746">
    <property type="entry name" value="SfsA_N"/>
    <property type="match status" value="1"/>
</dbReference>
<evidence type="ECO:0000255" key="1">
    <source>
        <dbReference type="HAMAP-Rule" id="MF_00095"/>
    </source>
</evidence>
<proteinExistence type="inferred from homology"/>
<gene>
    <name evidence="1" type="primary">sfsA</name>
    <name type="ordered locus">Teth514_0815</name>
</gene>